<reference key="1">
    <citation type="journal article" date="1996" name="Microbiology">
        <title>Gene arrangement and organization in an approximately 76 kb fragment encompassing the oriC region of the chromosome of Mycobacterium leprae.</title>
        <authorList>
            <person name="Fsihi H."/>
            <person name="de Rossi E."/>
            <person name="Salazar L."/>
            <person name="Cantoni R."/>
            <person name="Labo M."/>
            <person name="Riccardi G."/>
            <person name="Takiff H.E."/>
            <person name="Eiglmeier K."/>
            <person name="Bergh S."/>
            <person name="Cole S.T."/>
        </authorList>
    </citation>
    <scope>NUCLEOTIDE SEQUENCE [GENOMIC DNA]</scope>
</reference>
<reference key="2">
    <citation type="journal article" date="2001" name="Nature">
        <title>Massive gene decay in the leprosy bacillus.</title>
        <authorList>
            <person name="Cole S.T."/>
            <person name="Eiglmeier K."/>
            <person name="Parkhill J."/>
            <person name="James K.D."/>
            <person name="Thomson N.R."/>
            <person name="Wheeler P.R."/>
            <person name="Honore N."/>
            <person name="Garnier T."/>
            <person name="Churcher C.M."/>
            <person name="Harris D.E."/>
            <person name="Mungall K.L."/>
            <person name="Basham D."/>
            <person name="Brown D."/>
            <person name="Chillingworth T."/>
            <person name="Connor R."/>
            <person name="Davies R.M."/>
            <person name="Devlin K."/>
            <person name="Duthoy S."/>
            <person name="Feltwell T."/>
            <person name="Fraser A."/>
            <person name="Hamlin N."/>
            <person name="Holroyd S."/>
            <person name="Hornsby T."/>
            <person name="Jagels K."/>
            <person name="Lacroix C."/>
            <person name="Maclean J."/>
            <person name="Moule S."/>
            <person name="Murphy L.D."/>
            <person name="Oliver K."/>
            <person name="Quail M.A."/>
            <person name="Rajandream M.A."/>
            <person name="Rutherford K.M."/>
            <person name="Rutter S."/>
            <person name="Seeger K."/>
            <person name="Simon S."/>
            <person name="Simmonds M."/>
            <person name="Skelton J."/>
            <person name="Squares R."/>
            <person name="Squares S."/>
            <person name="Stevens K."/>
            <person name="Taylor K."/>
            <person name="Whitehead S."/>
            <person name="Woodward J.R."/>
            <person name="Barrell B.G."/>
        </authorList>
    </citation>
    <scope>NUCLEOTIDE SEQUENCE [LARGE SCALE GENOMIC DNA]</scope>
    <source>
        <strain>TN</strain>
    </source>
</reference>
<sequence>MLIAGTLCVCAAVISAVFGTWALIHNQTVDPTQLAMRAMAPPQLAAAIMLAAGGVVALVAVAHTALIVVAVCVTGAVGTLAAGSWQSARYTLRRRATATSCGKNCAGCILSCR</sequence>
<proteinExistence type="predicted"/>
<accession>O32871</accession>
<comment type="subcellular location">
    <subcellularLocation>
        <location evidence="2">Cell membrane</location>
        <topology evidence="2">Multi-pass membrane protein</topology>
    </subcellularLocation>
</comment>
<comment type="similarity">
    <text evidence="2">To M.tuberculosis Rv0039.</text>
</comment>
<feature type="chain" id="PRO_0000103657" description="Uncharacterized protein ML0030">
    <location>
        <begin position="1"/>
        <end position="113"/>
    </location>
</feature>
<feature type="transmembrane region" description="Helical" evidence="1">
    <location>
        <begin position="1"/>
        <end position="21"/>
    </location>
</feature>
<feature type="transmembrane region" description="Helical" evidence="1">
    <location>
        <begin position="48"/>
        <end position="68"/>
    </location>
</feature>
<evidence type="ECO:0000255" key="1"/>
<evidence type="ECO:0000305" key="2"/>
<keyword id="KW-1003">Cell membrane</keyword>
<keyword id="KW-0472">Membrane</keyword>
<keyword id="KW-1185">Reference proteome</keyword>
<keyword id="KW-0812">Transmembrane</keyword>
<keyword id="KW-1133">Transmembrane helix</keyword>
<protein>
    <recommendedName>
        <fullName>Uncharacterized protein ML0030</fullName>
    </recommendedName>
</protein>
<dbReference type="EMBL" id="Z70722">
    <property type="protein sequence ID" value="CAA94725.1"/>
    <property type="molecule type" value="Genomic_DNA"/>
</dbReference>
<dbReference type="EMBL" id="AL583917">
    <property type="protein sequence ID" value="CAC29538.1"/>
    <property type="molecule type" value="Genomic_DNA"/>
</dbReference>
<dbReference type="PIR" id="T10018">
    <property type="entry name" value="T10018"/>
</dbReference>
<dbReference type="RefSeq" id="NP_301154.1">
    <property type="nucleotide sequence ID" value="NC_002677.1"/>
</dbReference>
<dbReference type="RefSeq" id="WP_010907479.1">
    <property type="nucleotide sequence ID" value="NC_002677.1"/>
</dbReference>
<dbReference type="STRING" id="272631.gene:17573842"/>
<dbReference type="KEGG" id="mle:ML0030"/>
<dbReference type="PATRIC" id="fig|272631.5.peg.38"/>
<dbReference type="Leproma" id="ML0030"/>
<dbReference type="eggNOG" id="ENOG5032A3P">
    <property type="taxonomic scope" value="Bacteria"/>
</dbReference>
<dbReference type="HOGENOM" id="CLU_147351_0_0_11"/>
<dbReference type="OrthoDB" id="4753342at2"/>
<dbReference type="Proteomes" id="UP000000806">
    <property type="component" value="Chromosome"/>
</dbReference>
<dbReference type="GO" id="GO:0005886">
    <property type="term" value="C:plasma membrane"/>
    <property type="evidence" value="ECO:0007669"/>
    <property type="project" value="UniProtKB-SubCell"/>
</dbReference>
<name>Y030_MYCLE</name>
<gene>
    <name type="ordered locus">ML0030</name>
    <name type="ORF">MLB1770.18c</name>
</gene>
<organism>
    <name type="scientific">Mycobacterium leprae (strain TN)</name>
    <dbReference type="NCBI Taxonomy" id="272631"/>
    <lineage>
        <taxon>Bacteria</taxon>
        <taxon>Bacillati</taxon>
        <taxon>Actinomycetota</taxon>
        <taxon>Actinomycetes</taxon>
        <taxon>Mycobacteriales</taxon>
        <taxon>Mycobacteriaceae</taxon>
        <taxon>Mycobacterium</taxon>
    </lineage>
</organism>